<proteinExistence type="evidence at protein level"/>
<feature type="chain" id="PRO_0000454737" description="Protein YnhH">
    <location>
        <begin position="1"/>
        <end position="64"/>
    </location>
</feature>
<keyword id="KW-1185">Reference proteome</keyword>
<organism>
    <name type="scientific">Escherichia coli (strain K12)</name>
    <dbReference type="NCBI Taxonomy" id="83333"/>
    <lineage>
        <taxon>Bacteria</taxon>
        <taxon>Pseudomonadati</taxon>
        <taxon>Pseudomonadota</taxon>
        <taxon>Gammaproteobacteria</taxon>
        <taxon>Enterobacterales</taxon>
        <taxon>Enterobacteriaceae</taxon>
        <taxon>Escherichia</taxon>
    </lineage>
</organism>
<gene>
    <name evidence="2" type="primary">ynhH</name>
    <name evidence="3" type="ordered locus">b4817</name>
</gene>
<sequence>MDCRTQRLKNRHSRWAETQAHIPLHAFSMSPILRARHHHFRNTGFAFRQCAQKASFSHPSQLKD</sequence>
<protein>
    <recommendedName>
        <fullName evidence="2">Protein YnhH</fullName>
    </recommendedName>
</protein>
<comment type="induction">
    <text evidence="1">Identified when cells are grown in rich medium (at protein level).</text>
</comment>
<comment type="miscellaneous">
    <text evidence="1">Encoded upstream of the pykF promoter.</text>
</comment>
<evidence type="ECO:0000269" key="1">
    <source>
    </source>
</evidence>
<evidence type="ECO:0000303" key="2">
    <source>
    </source>
</evidence>
<evidence type="ECO:0000312" key="3">
    <source>
        <dbReference type="EMBL" id="UMR55113.1"/>
    </source>
</evidence>
<reference key="1">
    <citation type="journal article" date="1997" name="Science">
        <title>The complete genome sequence of Escherichia coli K-12.</title>
        <authorList>
            <person name="Blattner F.R."/>
            <person name="Plunkett G. III"/>
            <person name="Bloch C.A."/>
            <person name="Perna N.T."/>
            <person name="Burland V."/>
            <person name="Riley M."/>
            <person name="Collado-Vides J."/>
            <person name="Glasner J.D."/>
            <person name="Rode C.K."/>
            <person name="Mayhew G.F."/>
            <person name="Gregor J."/>
            <person name="Davis N.W."/>
            <person name="Kirkpatrick H.A."/>
            <person name="Goeden M.A."/>
            <person name="Rose D.J."/>
            <person name="Mau B."/>
            <person name="Shao Y."/>
        </authorList>
    </citation>
    <scope>NUCLEOTIDE SEQUENCE [LARGE SCALE GENOMIC DNA]</scope>
    <source>
        <strain>K12 / MG1655 / ATCC 47076</strain>
    </source>
</reference>
<reference key="2">
    <citation type="journal article" date="2022" name="J. Bacteriol.">
        <title>Identification of novel translated small ORFs in Escherichia coli using complementary ribosome profiling approaches.</title>
        <authorList>
            <person name="Stringer A."/>
            <person name="Smith C."/>
            <person name="Mangano K."/>
            <person name="Wade J.T."/>
        </authorList>
    </citation>
    <scope>IDENTIFICATION</scope>
    <source>
        <strain>K12 / MG1655 / ATCC 47076</strain>
    </source>
</reference>
<dbReference type="EMBL" id="U00096">
    <property type="protein sequence ID" value="UMR55113.1"/>
    <property type="molecule type" value="Genomic_DNA"/>
</dbReference>
<dbReference type="InParanoid" id="P0DUW2"/>
<dbReference type="BioCyc" id="EcoCyc:MONOMER0-4545"/>
<dbReference type="Proteomes" id="UP000000625">
    <property type="component" value="Chromosome"/>
</dbReference>
<dbReference type="Pfam" id="PF23642">
    <property type="entry name" value="YnhH-like"/>
    <property type="match status" value="1"/>
</dbReference>
<name>YNHH_ECOLI</name>
<accession>P0DUW2</accession>